<organism>
    <name type="scientific">Yersinia pestis (strain Pestoides F)</name>
    <dbReference type="NCBI Taxonomy" id="386656"/>
    <lineage>
        <taxon>Bacteria</taxon>
        <taxon>Pseudomonadati</taxon>
        <taxon>Pseudomonadota</taxon>
        <taxon>Gammaproteobacteria</taxon>
        <taxon>Enterobacterales</taxon>
        <taxon>Yersiniaceae</taxon>
        <taxon>Yersinia</taxon>
    </lineage>
</organism>
<proteinExistence type="inferred from homology"/>
<reference key="1">
    <citation type="submission" date="2007-02" db="EMBL/GenBank/DDBJ databases">
        <title>Complete sequence of chromosome of Yersinia pestis Pestoides F.</title>
        <authorList>
            <consortium name="US DOE Joint Genome Institute"/>
            <person name="Copeland A."/>
            <person name="Lucas S."/>
            <person name="Lapidus A."/>
            <person name="Barry K."/>
            <person name="Detter J.C."/>
            <person name="Glavina del Rio T."/>
            <person name="Hammon N."/>
            <person name="Israni S."/>
            <person name="Dalin E."/>
            <person name="Tice H."/>
            <person name="Pitluck S."/>
            <person name="Di Bartolo G."/>
            <person name="Chain P."/>
            <person name="Malfatti S."/>
            <person name="Shin M."/>
            <person name="Vergez L."/>
            <person name="Schmutz J."/>
            <person name="Larimer F."/>
            <person name="Land M."/>
            <person name="Hauser L."/>
            <person name="Worsham P."/>
            <person name="Chu M."/>
            <person name="Bearden S."/>
            <person name="Garcia E."/>
            <person name="Richardson P."/>
        </authorList>
    </citation>
    <scope>NUCLEOTIDE SEQUENCE [LARGE SCALE GENOMIC DNA]</scope>
    <source>
        <strain>Pestoides F</strain>
    </source>
</reference>
<protein>
    <recommendedName>
        <fullName evidence="1">Cytidine deaminase</fullName>
        <ecNumber evidence="1">3.5.4.5</ecNumber>
    </recommendedName>
    <alternativeName>
        <fullName evidence="1">Cytidine aminohydrolase</fullName>
        <shortName evidence="1">CDA</shortName>
    </alternativeName>
</protein>
<name>CDD_YERPP</name>
<sequence length="294" mass="31477">MQARFHTSWAELPASLQFALEPILSAENFPAMLTAEQVKTVKNISGLDDDALAFALLPLATACALTPISHFNVGAIARGKSGNFYFGANMEFRGVPLQQTIHAEQCAVTHAWLRGETNLVAITVNYTPCGHCRQFMNELNSGSELHIHLPGRPPSTLGQYLPDSFGPTDLAITTLLMDPVNHGYTLAETDPLTQAALNAANHSHAPYSQSHSGVALETTNGKIYAGRYAENAAFNPSLPPLQAALILANITGENCASIRRAVLVEGHNAVTSQWDTTLATLNALGCSAVKRVTF</sequence>
<dbReference type="EC" id="3.5.4.5" evidence="1"/>
<dbReference type="EMBL" id="CP000668">
    <property type="protein sequence ID" value="ABP39849.1"/>
    <property type="molecule type" value="Genomic_DNA"/>
</dbReference>
<dbReference type="RefSeq" id="WP_002211969.1">
    <property type="nucleotide sequence ID" value="NZ_CP009715.1"/>
</dbReference>
<dbReference type="SMR" id="A4TKN7"/>
<dbReference type="GeneID" id="57977056"/>
<dbReference type="KEGG" id="ypp:YPDSF_1462"/>
<dbReference type="PATRIC" id="fig|386656.14.peg.2320"/>
<dbReference type="GO" id="GO:0005829">
    <property type="term" value="C:cytosol"/>
    <property type="evidence" value="ECO:0007669"/>
    <property type="project" value="TreeGrafter"/>
</dbReference>
<dbReference type="GO" id="GO:0004126">
    <property type="term" value="F:cytidine deaminase activity"/>
    <property type="evidence" value="ECO:0007669"/>
    <property type="project" value="UniProtKB-UniRule"/>
</dbReference>
<dbReference type="GO" id="GO:0042802">
    <property type="term" value="F:identical protein binding"/>
    <property type="evidence" value="ECO:0007669"/>
    <property type="project" value="UniProtKB-ARBA"/>
</dbReference>
<dbReference type="GO" id="GO:0008270">
    <property type="term" value="F:zinc ion binding"/>
    <property type="evidence" value="ECO:0007669"/>
    <property type="project" value="UniProtKB-UniRule"/>
</dbReference>
<dbReference type="GO" id="GO:0009972">
    <property type="term" value="P:cytidine deamination"/>
    <property type="evidence" value="ECO:0007669"/>
    <property type="project" value="InterPro"/>
</dbReference>
<dbReference type="CDD" id="cd01283">
    <property type="entry name" value="cytidine_deaminase"/>
    <property type="match status" value="2"/>
</dbReference>
<dbReference type="FunFam" id="3.40.140.10:FF:000006">
    <property type="entry name" value="Cytidine deaminase"/>
    <property type="match status" value="1"/>
</dbReference>
<dbReference type="FunFam" id="3.40.140.10:FF:000007">
    <property type="entry name" value="Cytidine deaminase"/>
    <property type="match status" value="1"/>
</dbReference>
<dbReference type="Gene3D" id="3.40.140.10">
    <property type="entry name" value="Cytidine Deaminase, domain 2"/>
    <property type="match status" value="2"/>
</dbReference>
<dbReference type="HAMAP" id="MF_01558">
    <property type="entry name" value="Cyt_deam"/>
    <property type="match status" value="1"/>
</dbReference>
<dbReference type="InterPro" id="IPR016192">
    <property type="entry name" value="APOBEC/CMP_deaminase_Zn-bd"/>
</dbReference>
<dbReference type="InterPro" id="IPR002125">
    <property type="entry name" value="CMP_dCMP_dom"/>
</dbReference>
<dbReference type="InterPro" id="IPR013171">
    <property type="entry name" value="Cyd/dCyd_deaminase_Zn-bd"/>
</dbReference>
<dbReference type="InterPro" id="IPR050202">
    <property type="entry name" value="Cyt/Deoxycyt_deaminase"/>
</dbReference>
<dbReference type="InterPro" id="IPR006263">
    <property type="entry name" value="Cyt_deam_dimer"/>
</dbReference>
<dbReference type="InterPro" id="IPR016193">
    <property type="entry name" value="Cytidine_deaminase-like"/>
</dbReference>
<dbReference type="InterPro" id="IPR020797">
    <property type="entry name" value="Cytidine_deaminase_bacteria"/>
</dbReference>
<dbReference type="NCBIfam" id="TIGR01355">
    <property type="entry name" value="cyt_deam_dimer"/>
    <property type="match status" value="1"/>
</dbReference>
<dbReference type="NCBIfam" id="NF006537">
    <property type="entry name" value="PRK09027.1"/>
    <property type="match status" value="1"/>
</dbReference>
<dbReference type="PANTHER" id="PTHR11644">
    <property type="entry name" value="CYTIDINE DEAMINASE"/>
    <property type="match status" value="1"/>
</dbReference>
<dbReference type="PANTHER" id="PTHR11644:SF2">
    <property type="entry name" value="CYTIDINE DEAMINASE"/>
    <property type="match status" value="1"/>
</dbReference>
<dbReference type="Pfam" id="PF00383">
    <property type="entry name" value="dCMP_cyt_deam_1"/>
    <property type="match status" value="1"/>
</dbReference>
<dbReference type="Pfam" id="PF08211">
    <property type="entry name" value="dCMP_cyt_deam_2"/>
    <property type="match status" value="1"/>
</dbReference>
<dbReference type="PIRSF" id="PIRSF006334">
    <property type="entry name" value="Cdd_plus_pseudo"/>
    <property type="match status" value="1"/>
</dbReference>
<dbReference type="SUPFAM" id="SSF53927">
    <property type="entry name" value="Cytidine deaminase-like"/>
    <property type="match status" value="2"/>
</dbReference>
<dbReference type="PROSITE" id="PS00903">
    <property type="entry name" value="CYT_DCMP_DEAMINASES_1"/>
    <property type="match status" value="1"/>
</dbReference>
<dbReference type="PROSITE" id="PS51747">
    <property type="entry name" value="CYT_DCMP_DEAMINASES_2"/>
    <property type="match status" value="2"/>
</dbReference>
<accession>A4TKN7</accession>
<keyword id="KW-0378">Hydrolase</keyword>
<keyword id="KW-0479">Metal-binding</keyword>
<keyword id="KW-0862">Zinc</keyword>
<evidence type="ECO:0000255" key="1">
    <source>
        <dbReference type="HAMAP-Rule" id="MF_01558"/>
    </source>
</evidence>
<evidence type="ECO:0000255" key="2">
    <source>
        <dbReference type="PROSITE-ProRule" id="PRU01083"/>
    </source>
</evidence>
<feature type="chain" id="PRO_1000068975" description="Cytidine deaminase">
    <location>
        <begin position="1"/>
        <end position="294"/>
    </location>
</feature>
<feature type="domain" description="CMP/dCMP-type deaminase 1" evidence="2">
    <location>
        <begin position="48"/>
        <end position="168"/>
    </location>
</feature>
<feature type="domain" description="CMP/dCMP-type deaminase 2" evidence="2">
    <location>
        <begin position="187"/>
        <end position="294"/>
    </location>
</feature>
<feature type="active site" description="Proton donor" evidence="1">
    <location>
        <position position="104"/>
    </location>
</feature>
<feature type="binding site" evidence="1">
    <location>
        <begin position="89"/>
        <end position="91"/>
    </location>
    <ligand>
        <name>substrate</name>
    </ligand>
</feature>
<feature type="binding site" evidence="1">
    <location>
        <position position="102"/>
    </location>
    <ligand>
        <name>Zn(2+)</name>
        <dbReference type="ChEBI" id="CHEBI:29105"/>
        <note>catalytic</note>
    </ligand>
</feature>
<feature type="binding site" evidence="1">
    <location>
        <position position="129"/>
    </location>
    <ligand>
        <name>Zn(2+)</name>
        <dbReference type="ChEBI" id="CHEBI:29105"/>
        <note>catalytic</note>
    </ligand>
</feature>
<feature type="binding site" evidence="1">
    <location>
        <position position="132"/>
    </location>
    <ligand>
        <name>Zn(2+)</name>
        <dbReference type="ChEBI" id="CHEBI:29105"/>
        <note>catalytic</note>
    </ligand>
</feature>
<gene>
    <name evidence="1" type="primary">cdd</name>
    <name type="ordered locus">YPDSF_1462</name>
</gene>
<comment type="function">
    <text evidence="1">This enzyme scavenges exogenous and endogenous cytidine and 2'-deoxycytidine for UMP synthesis.</text>
</comment>
<comment type="catalytic activity">
    <reaction evidence="1">
        <text>cytidine + H2O + H(+) = uridine + NH4(+)</text>
        <dbReference type="Rhea" id="RHEA:16069"/>
        <dbReference type="ChEBI" id="CHEBI:15377"/>
        <dbReference type="ChEBI" id="CHEBI:15378"/>
        <dbReference type="ChEBI" id="CHEBI:16704"/>
        <dbReference type="ChEBI" id="CHEBI:17562"/>
        <dbReference type="ChEBI" id="CHEBI:28938"/>
        <dbReference type="EC" id="3.5.4.5"/>
    </reaction>
</comment>
<comment type="catalytic activity">
    <reaction evidence="1">
        <text>2'-deoxycytidine + H2O + H(+) = 2'-deoxyuridine + NH4(+)</text>
        <dbReference type="Rhea" id="RHEA:13433"/>
        <dbReference type="ChEBI" id="CHEBI:15377"/>
        <dbReference type="ChEBI" id="CHEBI:15378"/>
        <dbReference type="ChEBI" id="CHEBI:15698"/>
        <dbReference type="ChEBI" id="CHEBI:16450"/>
        <dbReference type="ChEBI" id="CHEBI:28938"/>
        <dbReference type="EC" id="3.5.4.5"/>
    </reaction>
</comment>
<comment type="cofactor">
    <cofactor evidence="1">
        <name>Zn(2+)</name>
        <dbReference type="ChEBI" id="CHEBI:29105"/>
    </cofactor>
    <text evidence="1">Binds 1 zinc ion.</text>
</comment>
<comment type="subunit">
    <text evidence="1">Homodimer.</text>
</comment>
<comment type="similarity">
    <text evidence="1">Belongs to the cytidine and deoxycytidylate deaminase family.</text>
</comment>